<gene>
    <name type="primary">fabD</name>
    <name type="ordered locus">SA1073</name>
</gene>
<sequence>MSKTAIIFPGQGAQKVGMAQDLFNNNDQATEILTSAAKTLDFDILETMFTDEEGKLGETENTQPALLTHSSALLAALKNLNPDFTMGHSLGEYSSLVAADVLSFEDAVKIVRKRGQLMAQAFPTGVGSMAAVLGLDFDKVDEICKSLSSDDKIIEPANINCPGQIVVSGHKALIDELVEKGKSLGAKRVMPLAVSGPFHSSLMKVIEEDFSSYINQFEWRDAKFPVVQNVNAQGETDKEVIKSNMVKQLYSPVQFINSTEWLIDQGVDHFIEIGPGKVLSGLIKKINRDVKLTSIQTLEDVKGWNEND</sequence>
<name>FABD_STAAN</name>
<comment type="catalytic activity">
    <reaction>
        <text>holo-[ACP] + malonyl-CoA = malonyl-[ACP] + CoA</text>
        <dbReference type="Rhea" id="RHEA:41792"/>
        <dbReference type="Rhea" id="RHEA-COMP:9623"/>
        <dbReference type="Rhea" id="RHEA-COMP:9685"/>
        <dbReference type="ChEBI" id="CHEBI:57287"/>
        <dbReference type="ChEBI" id="CHEBI:57384"/>
        <dbReference type="ChEBI" id="CHEBI:64479"/>
        <dbReference type="ChEBI" id="CHEBI:78449"/>
        <dbReference type="EC" id="2.3.1.39"/>
    </reaction>
</comment>
<comment type="pathway">
    <text>Lipid metabolism; fatty acid biosynthesis.</text>
</comment>
<comment type="similarity">
    <text evidence="2">Belongs to the FabD family.</text>
</comment>
<evidence type="ECO:0000250" key="1"/>
<evidence type="ECO:0000305" key="2"/>
<organism>
    <name type="scientific">Staphylococcus aureus (strain N315)</name>
    <dbReference type="NCBI Taxonomy" id="158879"/>
    <lineage>
        <taxon>Bacteria</taxon>
        <taxon>Bacillati</taxon>
        <taxon>Bacillota</taxon>
        <taxon>Bacilli</taxon>
        <taxon>Bacillales</taxon>
        <taxon>Staphylococcaceae</taxon>
        <taxon>Staphylococcus</taxon>
    </lineage>
</organism>
<accession>Q7A5Z3</accession>
<protein>
    <recommendedName>
        <fullName>Malonyl CoA-acyl carrier protein transacylase</fullName>
        <shortName>MCT</shortName>
        <ecNumber>2.3.1.39</ecNumber>
    </recommendedName>
</protein>
<feature type="chain" id="PRO_0000194226" description="Malonyl CoA-acyl carrier protein transacylase">
    <location>
        <begin position="1"/>
        <end position="308"/>
    </location>
</feature>
<feature type="active site" evidence="1">
    <location>
        <position position="89"/>
    </location>
</feature>
<feature type="active site" evidence="1">
    <location>
        <position position="199"/>
    </location>
</feature>
<dbReference type="EC" id="2.3.1.39"/>
<dbReference type="EMBL" id="BA000018">
    <property type="protein sequence ID" value="BAB42325.1"/>
    <property type="molecule type" value="Genomic_DNA"/>
</dbReference>
<dbReference type="PIR" id="A89896">
    <property type="entry name" value="A89896"/>
</dbReference>
<dbReference type="RefSeq" id="WP_000047343.1">
    <property type="nucleotide sequence ID" value="NC_002745.2"/>
</dbReference>
<dbReference type="SMR" id="Q7A5Z3"/>
<dbReference type="EnsemblBacteria" id="BAB42325">
    <property type="protein sequence ID" value="BAB42325"/>
    <property type="gene ID" value="BAB42325"/>
</dbReference>
<dbReference type="KEGG" id="sau:SA1073"/>
<dbReference type="HOGENOM" id="CLU_030558_0_1_9"/>
<dbReference type="UniPathway" id="UPA00094"/>
<dbReference type="GO" id="GO:0005829">
    <property type="term" value="C:cytosol"/>
    <property type="evidence" value="ECO:0007669"/>
    <property type="project" value="TreeGrafter"/>
</dbReference>
<dbReference type="GO" id="GO:0004314">
    <property type="term" value="F:[acyl-carrier-protein] S-malonyltransferase activity"/>
    <property type="evidence" value="ECO:0007669"/>
    <property type="project" value="UniProtKB-EC"/>
</dbReference>
<dbReference type="GO" id="GO:0006633">
    <property type="term" value="P:fatty acid biosynthetic process"/>
    <property type="evidence" value="ECO:0007669"/>
    <property type="project" value="UniProtKB-UniPathway"/>
</dbReference>
<dbReference type="FunFam" id="3.30.70.250:FF:000001">
    <property type="entry name" value="Malonyl CoA-acyl carrier protein transacylase"/>
    <property type="match status" value="1"/>
</dbReference>
<dbReference type="Gene3D" id="3.30.70.250">
    <property type="entry name" value="Malonyl-CoA ACP transacylase, ACP-binding"/>
    <property type="match status" value="1"/>
</dbReference>
<dbReference type="Gene3D" id="3.40.366.10">
    <property type="entry name" value="Malonyl-Coenzyme A Acyl Carrier Protein, domain 2"/>
    <property type="match status" value="1"/>
</dbReference>
<dbReference type="InterPro" id="IPR001227">
    <property type="entry name" value="Ac_transferase_dom_sf"/>
</dbReference>
<dbReference type="InterPro" id="IPR014043">
    <property type="entry name" value="Acyl_transferase_dom"/>
</dbReference>
<dbReference type="InterPro" id="IPR016035">
    <property type="entry name" value="Acyl_Trfase/lysoPLipase"/>
</dbReference>
<dbReference type="InterPro" id="IPR050858">
    <property type="entry name" value="Mal-CoA-ACP_Trans/PKS_FabD"/>
</dbReference>
<dbReference type="InterPro" id="IPR024925">
    <property type="entry name" value="Malonyl_CoA-ACP_transAc"/>
</dbReference>
<dbReference type="InterPro" id="IPR004410">
    <property type="entry name" value="Malonyl_CoA-ACP_transAc_FabD"/>
</dbReference>
<dbReference type="InterPro" id="IPR016036">
    <property type="entry name" value="Malonyl_transacylase_ACP-bd"/>
</dbReference>
<dbReference type="NCBIfam" id="TIGR00128">
    <property type="entry name" value="fabD"/>
    <property type="match status" value="1"/>
</dbReference>
<dbReference type="PANTHER" id="PTHR42681">
    <property type="entry name" value="MALONYL-COA-ACYL CARRIER PROTEIN TRANSACYLASE, MITOCHONDRIAL"/>
    <property type="match status" value="1"/>
</dbReference>
<dbReference type="PANTHER" id="PTHR42681:SF1">
    <property type="entry name" value="MALONYL-COA-ACYL CARRIER PROTEIN TRANSACYLASE, MITOCHONDRIAL"/>
    <property type="match status" value="1"/>
</dbReference>
<dbReference type="Pfam" id="PF00698">
    <property type="entry name" value="Acyl_transf_1"/>
    <property type="match status" value="1"/>
</dbReference>
<dbReference type="PIRSF" id="PIRSF000446">
    <property type="entry name" value="Mct"/>
    <property type="match status" value="1"/>
</dbReference>
<dbReference type="SMART" id="SM00827">
    <property type="entry name" value="PKS_AT"/>
    <property type="match status" value="1"/>
</dbReference>
<dbReference type="SUPFAM" id="SSF52151">
    <property type="entry name" value="FabD/lysophospholipase-like"/>
    <property type="match status" value="1"/>
</dbReference>
<dbReference type="SUPFAM" id="SSF55048">
    <property type="entry name" value="Probable ACP-binding domain of malonyl-CoA ACP transacylase"/>
    <property type="match status" value="1"/>
</dbReference>
<reference key="1">
    <citation type="journal article" date="2001" name="Lancet">
        <title>Whole genome sequencing of meticillin-resistant Staphylococcus aureus.</title>
        <authorList>
            <person name="Kuroda M."/>
            <person name="Ohta T."/>
            <person name="Uchiyama I."/>
            <person name="Baba T."/>
            <person name="Yuzawa H."/>
            <person name="Kobayashi I."/>
            <person name="Cui L."/>
            <person name="Oguchi A."/>
            <person name="Aoki K."/>
            <person name="Nagai Y."/>
            <person name="Lian J.-Q."/>
            <person name="Ito T."/>
            <person name="Kanamori M."/>
            <person name="Matsumaru H."/>
            <person name="Maruyama A."/>
            <person name="Murakami H."/>
            <person name="Hosoyama A."/>
            <person name="Mizutani-Ui Y."/>
            <person name="Takahashi N.K."/>
            <person name="Sawano T."/>
            <person name="Inoue R."/>
            <person name="Kaito C."/>
            <person name="Sekimizu K."/>
            <person name="Hirakawa H."/>
            <person name="Kuhara S."/>
            <person name="Goto S."/>
            <person name="Yabuzaki J."/>
            <person name="Kanehisa M."/>
            <person name="Yamashita A."/>
            <person name="Oshima K."/>
            <person name="Furuya K."/>
            <person name="Yoshino C."/>
            <person name="Shiba T."/>
            <person name="Hattori M."/>
            <person name="Ogasawara N."/>
            <person name="Hayashi H."/>
            <person name="Hiramatsu K."/>
        </authorList>
    </citation>
    <scope>NUCLEOTIDE SEQUENCE [LARGE SCALE GENOMIC DNA]</scope>
    <source>
        <strain>N315</strain>
    </source>
</reference>
<reference key="2">
    <citation type="journal article" date="2005" name="J. Microbiol. Methods">
        <title>Correlation of proteomic and transcriptomic profiles of Staphylococcus aureus during the post-exponential phase of growth.</title>
        <authorList>
            <person name="Scherl A."/>
            <person name="Francois P."/>
            <person name="Bento M."/>
            <person name="Deshusses J.M."/>
            <person name="Charbonnier Y."/>
            <person name="Converset V."/>
            <person name="Huyghe A."/>
            <person name="Walter N."/>
            <person name="Hoogland C."/>
            <person name="Appel R.D."/>
            <person name="Sanchez J.-C."/>
            <person name="Zimmermann-Ivol C.G."/>
            <person name="Corthals G.L."/>
            <person name="Hochstrasser D.F."/>
            <person name="Schrenzel J."/>
        </authorList>
    </citation>
    <scope>IDENTIFICATION BY MASS SPECTROMETRY</scope>
    <source>
        <strain>N315</strain>
    </source>
</reference>
<reference key="3">
    <citation type="submission" date="2007-10" db="UniProtKB">
        <title>Shotgun proteomic analysis of total and membrane protein extracts of S. aureus strain N315.</title>
        <authorList>
            <person name="Vaezzadeh A.R."/>
            <person name="Deshusses J."/>
            <person name="Lescuyer P."/>
            <person name="Hochstrasser D.F."/>
        </authorList>
    </citation>
    <scope>IDENTIFICATION BY MASS SPECTROMETRY [LARGE SCALE ANALYSIS]</scope>
    <source>
        <strain>N315</strain>
    </source>
</reference>
<proteinExistence type="evidence at protein level"/>
<keyword id="KW-0012">Acyltransferase</keyword>
<keyword id="KW-0275">Fatty acid biosynthesis</keyword>
<keyword id="KW-0276">Fatty acid metabolism</keyword>
<keyword id="KW-0444">Lipid biosynthesis</keyword>
<keyword id="KW-0443">Lipid metabolism</keyword>
<keyword id="KW-0808">Transferase</keyword>